<organism>
    <name type="scientific">Homo sapiens</name>
    <name type="common">Human</name>
    <dbReference type="NCBI Taxonomy" id="9606"/>
    <lineage>
        <taxon>Eukaryota</taxon>
        <taxon>Metazoa</taxon>
        <taxon>Chordata</taxon>
        <taxon>Craniata</taxon>
        <taxon>Vertebrata</taxon>
        <taxon>Euteleostomi</taxon>
        <taxon>Mammalia</taxon>
        <taxon>Eutheria</taxon>
        <taxon>Euarchontoglires</taxon>
        <taxon>Primates</taxon>
        <taxon>Haplorrhini</taxon>
        <taxon>Catarrhini</taxon>
        <taxon>Hominidae</taxon>
        <taxon>Homo</taxon>
    </lineage>
</organism>
<protein>
    <recommendedName>
        <fullName>Signal recognition particle 14 kDa protein</fullName>
        <shortName>SRP14</shortName>
    </recommendedName>
    <alternativeName>
        <fullName>18 kDa Alu RNA-binding protein</fullName>
    </alternativeName>
</protein>
<sequence>MVLLESEQFLTELTRLFQKCRTSGSVYITLKKYDGRTKPIPKKGTVEGFEPADNKCLLRATDGKKKISTVVSSKEVNKFQMAYSNLLRANMDGLKKRDKKNKTKKTKAAAAAAAAAPAAAATAPTTAATTAATAAQ</sequence>
<feature type="initiator methionine" description="Removed" evidence="9 12 14">
    <location>
        <position position="1"/>
    </location>
</feature>
<feature type="chain" id="PRO_0000135189" description="Signal recognition particle 14 kDa protein">
    <location>
        <begin position="2"/>
        <end position="136"/>
    </location>
</feature>
<feature type="region of interest" description="Disordered" evidence="2">
    <location>
        <begin position="116"/>
        <end position="136"/>
    </location>
</feature>
<feature type="modified residue" description="Phosphotyrosine" evidence="13">
    <location>
        <position position="27"/>
    </location>
</feature>
<feature type="sequence variant" id="VAR_028057" description="In dbSNP:rs1802601.">
    <original>P</original>
    <variation>S</variation>
    <location>
        <position position="51"/>
    </location>
</feature>
<feature type="sequence variant" id="VAR_028058" description="In dbSNP:rs1802600.">
    <original>S</original>
    <variation>I</variation>
    <location>
        <position position="68"/>
    </location>
</feature>
<feature type="sequence variant" id="VAR_028059" description="In dbSNP:rs7535." evidence="4 5 6 7 8 9">
    <original>P</original>
    <variation>A</variation>
    <location>
        <position position="124"/>
    </location>
</feature>
<feature type="sequence variant" id="VAR_028060" description="In dbSNP:rs200831083.">
    <original>T</original>
    <variation>A</variation>
    <location>
        <position position="125"/>
    </location>
</feature>
<feature type="sequence variant" id="VAR_028061" description="In dbSNP:rs16924521.">
    <original>A</original>
    <variation>T</variation>
    <location>
        <position position="127"/>
    </location>
</feature>
<feature type="sequence variant" id="VAR_028062" description="In dbSNP:rs4814.">
    <original>T</original>
    <variation>A</variation>
    <location>
        <position position="130"/>
    </location>
</feature>
<feature type="sequence conflict" description="In Ref. 3; BAB69067." evidence="10" ref="3">
    <original>T</original>
    <variation>A</variation>
    <location>
        <position position="129"/>
    </location>
</feature>
<feature type="strand" evidence="15">
    <location>
        <begin position="2"/>
        <end position="4"/>
    </location>
</feature>
<feature type="helix" evidence="16">
    <location>
        <begin position="6"/>
        <end position="19"/>
    </location>
</feature>
<feature type="strand" evidence="16">
    <location>
        <begin position="21"/>
        <end position="23"/>
    </location>
</feature>
<feature type="strand" evidence="16">
    <location>
        <begin position="26"/>
        <end position="32"/>
    </location>
</feature>
<feature type="strand" evidence="16">
    <location>
        <begin position="53"/>
        <end position="72"/>
    </location>
</feature>
<feature type="turn" evidence="16">
    <location>
        <begin position="73"/>
        <end position="75"/>
    </location>
</feature>
<feature type="helix" evidence="16">
    <location>
        <begin position="76"/>
        <end position="90"/>
    </location>
</feature>
<accession>P37108</accession>
<accession>B5BUF5</accession>
<accession>Q6B0K5</accession>
<accession>Q96Q14</accession>
<proteinExistence type="evidence at protein level"/>
<dbReference type="EMBL" id="X73459">
    <property type="protein sequence ID" value="CAA51838.1"/>
    <property type="molecule type" value="mRNA"/>
</dbReference>
<dbReference type="EMBL" id="U07857">
    <property type="protein sequence ID" value="AAA59066.1"/>
    <property type="molecule type" value="mRNA"/>
</dbReference>
<dbReference type="EMBL" id="AB061546">
    <property type="protein sequence ID" value="BAB69067.1"/>
    <property type="molecule type" value="mRNA"/>
</dbReference>
<dbReference type="EMBL" id="AB451391">
    <property type="protein sequence ID" value="BAG70205.1"/>
    <property type="molecule type" value="mRNA"/>
</dbReference>
<dbReference type="EMBL" id="AC025168">
    <property type="status" value="NOT_ANNOTATED_CDS"/>
    <property type="molecule type" value="Genomic_DNA"/>
</dbReference>
<dbReference type="EMBL" id="CH471125">
    <property type="protein sequence ID" value="EAW92390.1"/>
    <property type="molecule type" value="Genomic_DNA"/>
</dbReference>
<dbReference type="EMBL" id="BC035495">
    <property type="protein sequence ID" value="AAH35495.1"/>
    <property type="molecule type" value="mRNA"/>
</dbReference>
<dbReference type="EMBL" id="BC071716">
    <property type="protein sequence ID" value="AAH71716.1"/>
    <property type="molecule type" value="mRNA"/>
</dbReference>
<dbReference type="EMBL" id="BC100031">
    <property type="protein sequence ID" value="AAI00032.1"/>
    <property type="molecule type" value="mRNA"/>
</dbReference>
<dbReference type="CCDS" id="CCDS42017.1"/>
<dbReference type="PIR" id="A56062">
    <property type="entry name" value="A56062"/>
</dbReference>
<dbReference type="PIR" id="S34196">
    <property type="entry name" value="S34196"/>
</dbReference>
<dbReference type="RefSeq" id="NP_003125.3">
    <property type="nucleotide sequence ID" value="NM_003134.5"/>
</dbReference>
<dbReference type="PDB" id="1E8O">
    <property type="method" value="X-ray"/>
    <property type="resolution" value="3.20 A"/>
    <property type="chains" value="B/D=2-107"/>
</dbReference>
<dbReference type="PDB" id="1E8S">
    <property type="method" value="X-ray"/>
    <property type="resolution" value="4.00 A"/>
    <property type="chains" value="B=2-107"/>
</dbReference>
<dbReference type="PDB" id="1RY1">
    <property type="method" value="EM"/>
    <property type="resolution" value="12.00 A"/>
    <property type="chains" value="D=2-107"/>
</dbReference>
<dbReference type="PDB" id="4UYJ">
    <property type="method" value="X-ray"/>
    <property type="resolution" value="3.35 A"/>
    <property type="chains" value="B/D=1-107"/>
</dbReference>
<dbReference type="PDB" id="4UYK">
    <property type="method" value="X-ray"/>
    <property type="resolution" value="3.22 A"/>
    <property type="chains" value="B=1-107"/>
</dbReference>
<dbReference type="PDB" id="5AOX">
    <property type="method" value="X-ray"/>
    <property type="resolution" value="2.04 A"/>
    <property type="chains" value="B/E=2-95"/>
</dbReference>
<dbReference type="PDB" id="7NFX">
    <property type="method" value="EM"/>
    <property type="resolution" value="3.20 A"/>
    <property type="chains" value="t=1-136"/>
</dbReference>
<dbReference type="PDBsum" id="1E8O"/>
<dbReference type="PDBsum" id="1E8S"/>
<dbReference type="PDBsum" id="1RY1"/>
<dbReference type="PDBsum" id="4UYJ"/>
<dbReference type="PDBsum" id="4UYK"/>
<dbReference type="PDBsum" id="5AOX"/>
<dbReference type="PDBsum" id="7NFX"/>
<dbReference type="EMDB" id="EMD-12303"/>
<dbReference type="SMR" id="P37108"/>
<dbReference type="BioGRID" id="112605">
    <property type="interactions" value="392"/>
</dbReference>
<dbReference type="ComplexPortal" id="CPX-2652">
    <property type="entry name" value="Signal recognition particle"/>
</dbReference>
<dbReference type="CORUM" id="P37108"/>
<dbReference type="DIP" id="DIP-6152N"/>
<dbReference type="FunCoup" id="P37108">
    <property type="interactions" value="2259"/>
</dbReference>
<dbReference type="IntAct" id="P37108">
    <property type="interactions" value="210"/>
</dbReference>
<dbReference type="MINT" id="P37108"/>
<dbReference type="STRING" id="9606.ENSP00000267884"/>
<dbReference type="DrugBank" id="DB11638">
    <property type="generic name" value="Artenimol"/>
</dbReference>
<dbReference type="TCDB" id="3.A.5.9.1">
    <property type="family name" value="the general secretory pathway (sec) family"/>
</dbReference>
<dbReference type="GlyGen" id="P37108">
    <property type="glycosylation" value="3 sites, 1 O-linked glycan (3 sites)"/>
</dbReference>
<dbReference type="iPTMnet" id="P37108"/>
<dbReference type="MetOSite" id="P37108"/>
<dbReference type="PhosphoSitePlus" id="P37108"/>
<dbReference type="SwissPalm" id="P37108"/>
<dbReference type="BioMuta" id="SRP14"/>
<dbReference type="DMDM" id="116242801"/>
<dbReference type="jPOST" id="P37108"/>
<dbReference type="MassIVE" id="P37108"/>
<dbReference type="PaxDb" id="9606-ENSP00000267884"/>
<dbReference type="PeptideAtlas" id="P37108"/>
<dbReference type="ProteomicsDB" id="55263"/>
<dbReference type="Pumba" id="P37108"/>
<dbReference type="TopDownProteomics" id="P37108"/>
<dbReference type="Antibodypedia" id="5798">
    <property type="antibodies" value="153 antibodies from 26 providers"/>
</dbReference>
<dbReference type="DNASU" id="6727"/>
<dbReference type="Ensembl" id="ENST00000267884.11">
    <property type="protein sequence ID" value="ENSP00000267884.6"/>
    <property type="gene ID" value="ENSG00000140319.11"/>
</dbReference>
<dbReference type="GeneID" id="6727"/>
<dbReference type="KEGG" id="hsa:6727"/>
<dbReference type="MANE-Select" id="ENST00000267884.11">
    <property type="protein sequence ID" value="ENSP00000267884.6"/>
    <property type="RefSeq nucleotide sequence ID" value="NM_003134.6"/>
    <property type="RefSeq protein sequence ID" value="NP_003125.3"/>
</dbReference>
<dbReference type="UCSC" id="uc001zkq.3">
    <property type="organism name" value="human"/>
</dbReference>
<dbReference type="AGR" id="HGNC:11299"/>
<dbReference type="CTD" id="6727"/>
<dbReference type="DisGeNET" id="6727"/>
<dbReference type="GeneCards" id="SRP14"/>
<dbReference type="HGNC" id="HGNC:11299">
    <property type="gene designation" value="SRP14"/>
</dbReference>
<dbReference type="HPA" id="ENSG00000140319">
    <property type="expression patterns" value="Low tissue specificity"/>
</dbReference>
<dbReference type="MIM" id="600708">
    <property type="type" value="gene"/>
</dbReference>
<dbReference type="neXtProt" id="NX_P37108"/>
<dbReference type="OpenTargets" id="ENSG00000140319"/>
<dbReference type="PharmGKB" id="PA36123"/>
<dbReference type="VEuPathDB" id="HostDB:ENSG00000140319"/>
<dbReference type="eggNOG" id="KOG1761">
    <property type="taxonomic scope" value="Eukaryota"/>
</dbReference>
<dbReference type="GeneTree" id="ENSGT00390000008496"/>
<dbReference type="HOGENOM" id="CLU_094309_2_1_1"/>
<dbReference type="InParanoid" id="P37108"/>
<dbReference type="OMA" id="RFNGHNK"/>
<dbReference type="OrthoDB" id="19209at2759"/>
<dbReference type="PAN-GO" id="P37108">
    <property type="GO annotations" value="2 GO annotations based on evolutionary models"/>
</dbReference>
<dbReference type="PhylomeDB" id="P37108"/>
<dbReference type="TreeFam" id="TF106247"/>
<dbReference type="PathwayCommons" id="P37108"/>
<dbReference type="Reactome" id="R-HSA-1799339">
    <property type="pathway name" value="SRP-dependent cotranslational protein targeting to membrane"/>
</dbReference>
<dbReference type="Reactome" id="R-HSA-6798695">
    <property type="pathway name" value="Neutrophil degranulation"/>
</dbReference>
<dbReference type="SignaLink" id="P37108"/>
<dbReference type="BioGRID-ORCS" id="6727">
    <property type="hits" value="570 hits in 1171 CRISPR screens"/>
</dbReference>
<dbReference type="CD-CODE" id="91857CE7">
    <property type="entry name" value="Nucleolus"/>
</dbReference>
<dbReference type="CD-CODE" id="DEE660B4">
    <property type="entry name" value="Stress granule"/>
</dbReference>
<dbReference type="ChiTaRS" id="SRP14">
    <property type="organism name" value="human"/>
</dbReference>
<dbReference type="EvolutionaryTrace" id="P37108"/>
<dbReference type="GenomeRNAi" id="6727"/>
<dbReference type="Pharos" id="P37108">
    <property type="development level" value="Tbio"/>
</dbReference>
<dbReference type="PRO" id="PR:P37108"/>
<dbReference type="Proteomes" id="UP000005640">
    <property type="component" value="Chromosome 15"/>
</dbReference>
<dbReference type="RNAct" id="P37108">
    <property type="molecule type" value="protein"/>
</dbReference>
<dbReference type="Bgee" id="ENSG00000140319">
    <property type="expression patterns" value="Expressed in renal medulla and 217 other cell types or tissues"/>
</dbReference>
<dbReference type="ExpressionAtlas" id="P37108">
    <property type="expression patterns" value="baseline and differential"/>
</dbReference>
<dbReference type="GO" id="GO:0005737">
    <property type="term" value="C:cytoplasm"/>
    <property type="evidence" value="ECO:0000304"/>
    <property type="project" value="ProtInc"/>
</dbReference>
<dbReference type="GO" id="GO:0005829">
    <property type="term" value="C:cytosol"/>
    <property type="evidence" value="ECO:0000304"/>
    <property type="project" value="Reactome"/>
</dbReference>
<dbReference type="GO" id="GO:0005576">
    <property type="term" value="C:extracellular region"/>
    <property type="evidence" value="ECO:0000304"/>
    <property type="project" value="Reactome"/>
</dbReference>
<dbReference type="GO" id="GO:1904813">
    <property type="term" value="C:ficolin-1-rich granule lumen"/>
    <property type="evidence" value="ECO:0000304"/>
    <property type="project" value="Reactome"/>
</dbReference>
<dbReference type="GO" id="GO:0005634">
    <property type="term" value="C:nucleus"/>
    <property type="evidence" value="ECO:0000314"/>
    <property type="project" value="UniProtKB"/>
</dbReference>
<dbReference type="GO" id="GO:0034774">
    <property type="term" value="C:secretory granule lumen"/>
    <property type="evidence" value="ECO:0000304"/>
    <property type="project" value="Reactome"/>
</dbReference>
<dbReference type="GO" id="GO:0005786">
    <property type="term" value="C:signal recognition particle, endoplasmic reticulum targeting"/>
    <property type="evidence" value="ECO:0000314"/>
    <property type="project" value="UniProtKB"/>
</dbReference>
<dbReference type="GO" id="GO:0008312">
    <property type="term" value="F:7S RNA binding"/>
    <property type="evidence" value="ECO:0000304"/>
    <property type="project" value="ProtInc"/>
</dbReference>
<dbReference type="GO" id="GO:0030942">
    <property type="term" value="F:endoplasmic reticulum signal peptide binding"/>
    <property type="evidence" value="ECO:0007669"/>
    <property type="project" value="InterPro"/>
</dbReference>
<dbReference type="GO" id="GO:0003723">
    <property type="term" value="F:RNA binding"/>
    <property type="evidence" value="ECO:0007005"/>
    <property type="project" value="UniProtKB"/>
</dbReference>
<dbReference type="GO" id="GO:0006613">
    <property type="term" value="P:cotranslational protein targeting to membrane"/>
    <property type="evidence" value="ECO:0000304"/>
    <property type="project" value="ProtInc"/>
</dbReference>
<dbReference type="GO" id="GO:0045047">
    <property type="term" value="P:protein targeting to ER"/>
    <property type="evidence" value="ECO:0000315"/>
    <property type="project" value="UniProtKB"/>
</dbReference>
<dbReference type="GO" id="GO:0006614">
    <property type="term" value="P:SRP-dependent cotranslational protein targeting to membrane"/>
    <property type="evidence" value="ECO:0007669"/>
    <property type="project" value="InterPro"/>
</dbReference>
<dbReference type="FunFam" id="3.30.720.10:FF:000002">
    <property type="entry name" value="signal recognition particle 14 kDa protein-like"/>
    <property type="match status" value="1"/>
</dbReference>
<dbReference type="Gene3D" id="3.30.720.10">
    <property type="entry name" value="Signal recognition particle alu RNA binding heterodimer, srp9/1"/>
    <property type="match status" value="1"/>
</dbReference>
<dbReference type="InterPro" id="IPR003210">
    <property type="entry name" value="Signal_recog_particle_SRP14"/>
</dbReference>
<dbReference type="InterPro" id="IPR009018">
    <property type="entry name" value="Signal_recog_particle_SRP9/14"/>
</dbReference>
<dbReference type="PANTHER" id="PTHR12013">
    <property type="entry name" value="SIGNAL RECOGNITION PARTICLE 14 KD PROTEIN"/>
    <property type="match status" value="1"/>
</dbReference>
<dbReference type="Pfam" id="PF02290">
    <property type="entry name" value="SRP14"/>
    <property type="match status" value="1"/>
</dbReference>
<dbReference type="SUPFAM" id="SSF54762">
    <property type="entry name" value="Signal recognition particle alu RNA binding heterodimer, SRP9/14"/>
    <property type="match status" value="1"/>
</dbReference>
<reference key="1">
    <citation type="journal article" date="1995" name="Mol. Biol. Cell">
        <title>The SRP9/14 subunit of the signal recognition particle (SRP) is present in more than 20-fold excess over SRP in primate cells and exists primarily free but also in complex with small cytoplasmic Alu RNAs.</title>
        <authorList>
            <person name="Bovia F."/>
            <person name="Fornallaz M."/>
            <person name="Leffers H."/>
            <person name="Strub K."/>
        </authorList>
    </citation>
    <scope>NUCLEOTIDE SEQUENCE [MRNA]</scope>
    <scope>VARIANT ALA-124</scope>
</reference>
<reference key="2">
    <citation type="journal article" date="1994" name="Mol. Cell. Biol.">
        <title>A human Alu RNA-binding protein whose expression is associated with accumulation of small cytoplasmic Alu RNA.</title>
        <authorList>
            <person name="Chang D.-Y."/>
            <person name="Nelson B."/>
            <person name="Bilyeu T."/>
            <person name="Hsu K."/>
            <person name="Darlington G.J."/>
            <person name="Maraia R.J."/>
        </authorList>
    </citation>
    <scope>NUCLEOTIDE SEQUENCE [MRNA]</scope>
</reference>
<reference key="3">
    <citation type="submission" date="2001-05" db="EMBL/GenBank/DDBJ databases">
        <title>A novel gene encoding signal recognition particle 14kD is upregulated in the acute morphine dependent SH-SY5Y cells.</title>
        <authorList>
            <person name="Wang H."/>
            <person name="Gao X."/>
            <person name="Huang Y."/>
            <person name="Han J."/>
        </authorList>
    </citation>
    <scope>NUCLEOTIDE SEQUENCE [MRNA]</scope>
    <scope>VARIANT ALA-124</scope>
</reference>
<reference key="4">
    <citation type="journal article" date="2008" name="Nat. Methods">
        <title>Human protein factory for converting the transcriptome into an in vitro-expressed proteome.</title>
        <authorList>
            <person name="Goshima N."/>
            <person name="Kawamura Y."/>
            <person name="Fukumoto A."/>
            <person name="Miura A."/>
            <person name="Honma R."/>
            <person name="Satoh R."/>
            <person name="Wakamatsu A."/>
            <person name="Yamamoto J."/>
            <person name="Kimura K."/>
            <person name="Nishikawa T."/>
            <person name="Andoh T."/>
            <person name="Iida Y."/>
            <person name="Ishikawa K."/>
            <person name="Ito E."/>
            <person name="Kagawa N."/>
            <person name="Kaminaga C."/>
            <person name="Kanehori K."/>
            <person name="Kawakami B."/>
            <person name="Kenmochi K."/>
            <person name="Kimura R."/>
            <person name="Kobayashi M."/>
            <person name="Kuroita T."/>
            <person name="Kuwayama H."/>
            <person name="Maruyama Y."/>
            <person name="Matsuo K."/>
            <person name="Minami K."/>
            <person name="Mitsubori M."/>
            <person name="Mori M."/>
            <person name="Morishita R."/>
            <person name="Murase A."/>
            <person name="Nishikawa A."/>
            <person name="Nishikawa S."/>
            <person name="Okamoto T."/>
            <person name="Sakagami N."/>
            <person name="Sakamoto Y."/>
            <person name="Sasaki Y."/>
            <person name="Seki T."/>
            <person name="Sono S."/>
            <person name="Sugiyama A."/>
            <person name="Sumiya T."/>
            <person name="Takayama T."/>
            <person name="Takayama Y."/>
            <person name="Takeda H."/>
            <person name="Togashi T."/>
            <person name="Yahata K."/>
            <person name="Yamada H."/>
            <person name="Yanagisawa Y."/>
            <person name="Endo Y."/>
            <person name="Imamoto F."/>
            <person name="Kisu Y."/>
            <person name="Tanaka S."/>
            <person name="Isogai T."/>
            <person name="Imai J."/>
            <person name="Watanabe S."/>
            <person name="Nomura N."/>
        </authorList>
    </citation>
    <scope>NUCLEOTIDE SEQUENCE [LARGE SCALE MRNA]</scope>
    <scope>VARIANT ALA-124</scope>
</reference>
<reference key="5">
    <citation type="journal article" date="2006" name="Nature">
        <title>Analysis of the DNA sequence and duplication history of human chromosome 15.</title>
        <authorList>
            <person name="Zody M.C."/>
            <person name="Garber M."/>
            <person name="Sharpe T."/>
            <person name="Young S.K."/>
            <person name="Rowen L."/>
            <person name="O'Neill K."/>
            <person name="Whittaker C.A."/>
            <person name="Kamal M."/>
            <person name="Chang J.L."/>
            <person name="Cuomo C.A."/>
            <person name="Dewar K."/>
            <person name="FitzGerald M.G."/>
            <person name="Kodira C.D."/>
            <person name="Madan A."/>
            <person name="Qin S."/>
            <person name="Yang X."/>
            <person name="Abbasi N."/>
            <person name="Abouelleil A."/>
            <person name="Arachchi H.M."/>
            <person name="Baradarani L."/>
            <person name="Birditt B."/>
            <person name="Bloom S."/>
            <person name="Bloom T."/>
            <person name="Borowsky M.L."/>
            <person name="Burke J."/>
            <person name="Butler J."/>
            <person name="Cook A."/>
            <person name="DeArellano K."/>
            <person name="DeCaprio D."/>
            <person name="Dorris L. III"/>
            <person name="Dors M."/>
            <person name="Eichler E.E."/>
            <person name="Engels R."/>
            <person name="Fahey J."/>
            <person name="Fleetwood P."/>
            <person name="Friedman C."/>
            <person name="Gearin G."/>
            <person name="Hall J.L."/>
            <person name="Hensley G."/>
            <person name="Johnson E."/>
            <person name="Jones C."/>
            <person name="Kamat A."/>
            <person name="Kaur A."/>
            <person name="Locke D.P."/>
            <person name="Madan A."/>
            <person name="Munson G."/>
            <person name="Jaffe D.B."/>
            <person name="Lui A."/>
            <person name="Macdonald P."/>
            <person name="Mauceli E."/>
            <person name="Naylor J.W."/>
            <person name="Nesbitt R."/>
            <person name="Nicol R."/>
            <person name="O'Leary S.B."/>
            <person name="Ratcliffe A."/>
            <person name="Rounsley S."/>
            <person name="She X."/>
            <person name="Sneddon K.M.B."/>
            <person name="Stewart S."/>
            <person name="Sougnez C."/>
            <person name="Stone S.M."/>
            <person name="Topham K."/>
            <person name="Vincent D."/>
            <person name="Wang S."/>
            <person name="Zimmer A.R."/>
            <person name="Birren B.W."/>
            <person name="Hood L."/>
            <person name="Lander E.S."/>
            <person name="Nusbaum C."/>
        </authorList>
    </citation>
    <scope>NUCLEOTIDE SEQUENCE [LARGE SCALE GENOMIC DNA]</scope>
</reference>
<reference key="6">
    <citation type="submission" date="2005-07" db="EMBL/GenBank/DDBJ databases">
        <authorList>
            <person name="Mural R.J."/>
            <person name="Istrail S."/>
            <person name="Sutton G.G."/>
            <person name="Florea L."/>
            <person name="Halpern A.L."/>
            <person name="Mobarry C.M."/>
            <person name="Lippert R."/>
            <person name="Walenz B."/>
            <person name="Shatkay H."/>
            <person name="Dew I."/>
            <person name="Miller J.R."/>
            <person name="Flanigan M.J."/>
            <person name="Edwards N.J."/>
            <person name="Bolanos R."/>
            <person name="Fasulo D."/>
            <person name="Halldorsson B.V."/>
            <person name="Hannenhalli S."/>
            <person name="Turner R."/>
            <person name="Yooseph S."/>
            <person name="Lu F."/>
            <person name="Nusskern D.R."/>
            <person name="Shue B.C."/>
            <person name="Zheng X.H."/>
            <person name="Zhong F."/>
            <person name="Delcher A.L."/>
            <person name="Huson D.H."/>
            <person name="Kravitz S.A."/>
            <person name="Mouchard L."/>
            <person name="Reinert K."/>
            <person name="Remington K.A."/>
            <person name="Clark A.G."/>
            <person name="Waterman M.S."/>
            <person name="Eichler E.E."/>
            <person name="Adams M.D."/>
            <person name="Hunkapiller M.W."/>
            <person name="Myers E.W."/>
            <person name="Venter J.C."/>
        </authorList>
    </citation>
    <scope>NUCLEOTIDE SEQUENCE [LARGE SCALE GENOMIC DNA]</scope>
    <scope>VARIANT ALA-124</scope>
</reference>
<reference key="7">
    <citation type="journal article" date="2004" name="Genome Res.">
        <title>The status, quality, and expansion of the NIH full-length cDNA project: the Mammalian Gene Collection (MGC).</title>
        <authorList>
            <consortium name="The MGC Project Team"/>
        </authorList>
    </citation>
    <scope>NUCLEOTIDE SEQUENCE [LARGE SCALE MRNA]</scope>
    <scope>VARIANT ALA-124</scope>
    <source>
        <tissue>Cervix</tissue>
        <tissue>Prostate</tissue>
        <tissue>Uterus</tissue>
    </source>
</reference>
<reference key="8">
    <citation type="submission" date="2008-02" db="UniProtKB">
        <authorList>
            <person name="Bienvenut W.V."/>
            <person name="Boldt K."/>
            <person name="von Kriegsheim A.F."/>
            <person name="Murray L."/>
            <person name="Brunton V.G."/>
            <person name="Frame M.C."/>
            <person name="Calvo F."/>
            <person name="Kolch W."/>
        </authorList>
    </citation>
    <scope>PROTEIN SEQUENCE OF 2-15; 22-31; 79-88 AND 108-136</scope>
    <scope>VARIANT ALA-124</scope>
    <scope>CLEAVAGE OF INITIATOR METHIONINE</scope>
    <scope>IDENTIFICATION BY MASS SPECTROMETRY</scope>
    <source>
        <tissue>Cervix carcinoma</tissue>
        <tissue>Colon adenocarcinoma</tissue>
        <tissue>Hepatoma</tissue>
    </source>
</reference>
<reference key="9">
    <citation type="journal article" date="2011" name="BMC Syst. Biol.">
        <title>Initial characterization of the human central proteome.</title>
        <authorList>
            <person name="Burkard T.R."/>
            <person name="Planyavsky M."/>
            <person name="Kaupe I."/>
            <person name="Breitwieser F.P."/>
            <person name="Buerckstuemmer T."/>
            <person name="Bennett K.L."/>
            <person name="Superti-Furga G."/>
            <person name="Colinge J."/>
        </authorList>
    </citation>
    <scope>IDENTIFICATION BY MASS SPECTROMETRY [LARGE SCALE ANALYSIS]</scope>
</reference>
<reference key="10">
    <citation type="journal article" date="2012" name="Mol. Cell. Proteomics">
        <title>Comparative large-scale characterisation of plant vs. mammal proteins reveals similar and idiosyncratic N-alpha acetylation features.</title>
        <authorList>
            <person name="Bienvenut W.V."/>
            <person name="Sumpton D."/>
            <person name="Martinez A."/>
            <person name="Lilla S."/>
            <person name="Espagne C."/>
            <person name="Meinnel T."/>
            <person name="Giglione C."/>
        </authorList>
    </citation>
    <scope>CLEAVAGE OF INITIATOR METHIONINE [LARGE SCALE ANALYSIS]</scope>
    <scope>IDENTIFICATION BY MASS SPECTROMETRY [LARGE SCALE ANALYSIS]</scope>
</reference>
<reference key="11">
    <citation type="journal article" date="2012" name="Proc. Natl. Acad. Sci. U.S.A.">
        <title>N-terminal acetylome analyses and functional insights of the N-terminal acetyltransferase NatB.</title>
        <authorList>
            <person name="Van Damme P."/>
            <person name="Lasa M."/>
            <person name="Polevoda B."/>
            <person name="Gazquez C."/>
            <person name="Elosegui-Artola A."/>
            <person name="Kim D.S."/>
            <person name="De Juan-Pardo E."/>
            <person name="Demeyer K."/>
            <person name="Hole K."/>
            <person name="Larrea E."/>
            <person name="Timmerman E."/>
            <person name="Prieto J."/>
            <person name="Arnesen T."/>
            <person name="Sherman F."/>
            <person name="Gevaert K."/>
            <person name="Aldabe R."/>
        </authorList>
    </citation>
    <scope>IDENTIFICATION BY MASS SPECTROMETRY [LARGE SCALE ANALYSIS]</scope>
</reference>
<reference key="12">
    <citation type="journal article" date="2014" name="J. Proteomics">
        <title>An enzyme assisted RP-RPLC approach for in-depth analysis of human liver phosphoproteome.</title>
        <authorList>
            <person name="Bian Y."/>
            <person name="Song C."/>
            <person name="Cheng K."/>
            <person name="Dong M."/>
            <person name="Wang F."/>
            <person name="Huang J."/>
            <person name="Sun D."/>
            <person name="Wang L."/>
            <person name="Ye M."/>
            <person name="Zou H."/>
        </authorList>
    </citation>
    <scope>PHOSPHORYLATION [LARGE SCALE ANALYSIS] AT TYR-27</scope>
    <scope>IDENTIFICATION BY MASS SPECTROMETRY [LARGE SCALE ANALYSIS]</scope>
    <source>
        <tissue>Liver</tissue>
    </source>
</reference>
<reference key="13">
    <citation type="journal article" date="2015" name="Proteomics">
        <title>N-terminome analysis of the human mitochondrial proteome.</title>
        <authorList>
            <person name="Vaca Jacome A.S."/>
            <person name="Rabilloud T."/>
            <person name="Schaeffer-Reiss C."/>
            <person name="Rompais M."/>
            <person name="Ayoub D."/>
            <person name="Lane L."/>
            <person name="Bairoch A."/>
            <person name="Van Dorsselaer A."/>
            <person name="Carapito C."/>
        </authorList>
    </citation>
    <scope>CLEAVAGE OF INITIATOR METHIONINE [LARGE SCALE ANALYSIS]</scope>
    <scope>IDENTIFICATION BY MASS SPECTROMETRY [LARGE SCALE ANALYSIS]</scope>
</reference>
<reference key="14">
    <citation type="journal article" date="2000" name="Nature">
        <title>Structure and assembly of the Alu domain of the mammalian signal recognition particle.</title>
        <authorList>
            <person name="Weichenrieder O."/>
            <person name="Wild K."/>
            <person name="Strub K."/>
            <person name="Cusack S."/>
        </authorList>
    </citation>
    <scope>X-RAY CRYSTALLOGRAPHY (3.2 ANGSTROMS) OF 2-107 IN COMPLEX WITH SRP9</scope>
    <scope>FUNCTION</scope>
    <scope>SUBUNIT</scope>
</reference>
<reference evidence="11" key="15">
    <citation type="journal article" date="2021" name="Sci. Adv.">
        <title>Receptor compaction and GTPase rearrangement drive SRP-mediated cotranslational protein translocation into the ER.</title>
        <authorList>
            <person name="Lee J.H."/>
            <person name="Jomaa A."/>
            <person name="Jomaa A."/>
            <person name="Chung S."/>
            <person name="Hwang Fu Y.H."/>
            <person name="Qian R."/>
            <person name="Sun X."/>
            <person name="Hsieh H.H."/>
            <person name="Chandrasekar S."/>
            <person name="Bi X."/>
            <person name="Mattei S."/>
            <person name="Boehringer D."/>
            <person name="Weiss S."/>
            <person name="Ban N."/>
            <person name="Shan S.O."/>
        </authorList>
    </citation>
    <scope>STRUCTURE BY ELECTRON MICROSCOPY (3.20 ANGSTROMS) OF SIGNAL RECOGNITION PARTICLE IN COMPLEX WITH RIBOSOME NASCENT CHAIN COMPLEX AND THE SRP RECEPTOR</scope>
</reference>
<gene>
    <name type="primary">SRP14</name>
</gene>
<comment type="function">
    <text evidence="3">Component of the signal recognition particle (SRP) complex, a ribonucleoprotein complex that mediates the cotranslational targeting of secretory and membrane proteins to the endoplasmic reticulum (ER) (PubMed:11089964). SRP9 together with SRP14 and the Alu portion of the SRP RNA, constitutes the elongation arrest domain of SRP (PubMed:11089964). The complex of SRP9 and SRP14 is required for SRP RNA binding (PubMed:11089964).</text>
</comment>
<comment type="subunit">
    <text evidence="1 3">Heterodimer with SRP9; binds RNA as heterodimer (By similarity). Component of a signal recognition particle (SRP) complex that consists of a 7SL RNA molecule of 300 nucleotides and six protein subunits: SRP72, SRP68, SRP54, SRP19, SRP14 and SRP9 (PubMed:11089964).</text>
</comment>
<comment type="interaction">
    <interactant intactId="EBI-353399">
        <id>P37108</id>
    </interactant>
    <interactant intactId="EBI-395655">
        <id>Q9H8H2</id>
        <label>DDX31</label>
    </interactant>
    <organismsDiffer>false</organismsDiffer>
    <experiments>3</experiments>
</comment>
<comment type="interaction">
    <interactant intactId="EBI-353399">
        <id>P37108</id>
    </interactant>
    <interactant intactId="EBI-769261">
        <id>Q96JC9</id>
        <label>EAF1</label>
    </interactant>
    <organismsDiffer>false</organismsDiffer>
    <experiments>3</experiments>
</comment>
<comment type="interaction">
    <interactant intactId="EBI-353399">
        <id>P37108</id>
    </interactant>
    <interactant intactId="EBI-12023934">
        <id>Q5MJ10</id>
        <label>SPANXN2</label>
    </interactant>
    <organismsDiffer>false</organismsDiffer>
    <experiments>3</experiments>
</comment>
<comment type="interaction">
    <interactant intactId="EBI-353399">
        <id>P37108</id>
    </interactant>
    <interactant intactId="EBI-350743">
        <id>P49458</id>
        <label>SRP9</label>
    </interactant>
    <organismsDiffer>false</organismsDiffer>
    <experiments>11</experiments>
</comment>
<comment type="interaction">
    <interactant intactId="EBI-353399">
        <id>P37108</id>
    </interactant>
    <interactant intactId="EBI-15490029">
        <id>P49458-1</id>
        <label>SRP9</label>
    </interactant>
    <organismsDiffer>false</organismsDiffer>
    <experiments>2</experiments>
</comment>
<comment type="subcellular location">
    <subcellularLocation>
        <location>Cytoplasm</location>
    </subcellularLocation>
</comment>
<comment type="similarity">
    <text evidence="10">Belongs to the SRP14 family.</text>
</comment>
<comment type="online information" name="Wikipedia">
    <link uri="https://en.wikipedia.org/wiki/Signal_recognition_particle"/>
    <text>Signal recognition particle entry</text>
</comment>
<name>SRP14_HUMAN</name>
<evidence type="ECO:0000250" key="1">
    <source>
        <dbReference type="UniProtKB" id="P16255"/>
    </source>
</evidence>
<evidence type="ECO:0000256" key="2">
    <source>
        <dbReference type="SAM" id="MobiDB-lite"/>
    </source>
</evidence>
<evidence type="ECO:0000269" key="3">
    <source>
    </source>
</evidence>
<evidence type="ECO:0000269" key="4">
    <source>
    </source>
</evidence>
<evidence type="ECO:0000269" key="5">
    <source>
    </source>
</evidence>
<evidence type="ECO:0000269" key="6">
    <source>
    </source>
</evidence>
<evidence type="ECO:0000269" key="7">
    <source ref="3"/>
</evidence>
<evidence type="ECO:0000269" key="8">
    <source ref="6"/>
</evidence>
<evidence type="ECO:0000269" key="9">
    <source ref="8"/>
</evidence>
<evidence type="ECO:0000305" key="10"/>
<evidence type="ECO:0007744" key="11">
    <source>
        <dbReference type="PDB" id="7NFX"/>
    </source>
</evidence>
<evidence type="ECO:0007744" key="12">
    <source>
    </source>
</evidence>
<evidence type="ECO:0007744" key="13">
    <source>
    </source>
</evidence>
<evidence type="ECO:0007744" key="14">
    <source>
    </source>
</evidence>
<evidence type="ECO:0007829" key="15">
    <source>
        <dbReference type="PDB" id="4UYJ"/>
    </source>
</evidence>
<evidence type="ECO:0007829" key="16">
    <source>
        <dbReference type="PDB" id="5AOX"/>
    </source>
</evidence>
<keyword id="KW-0002">3D-structure</keyword>
<keyword id="KW-0963">Cytoplasm</keyword>
<keyword id="KW-0903">Direct protein sequencing</keyword>
<keyword id="KW-0597">Phosphoprotein</keyword>
<keyword id="KW-1267">Proteomics identification</keyword>
<keyword id="KW-1185">Reference proteome</keyword>
<keyword id="KW-0687">Ribonucleoprotein</keyword>
<keyword id="KW-0694">RNA-binding</keyword>
<keyword id="KW-0733">Signal recognition particle</keyword>